<evidence type="ECO:0000256" key="1">
    <source>
        <dbReference type="SAM" id="MobiDB-lite"/>
    </source>
</evidence>
<evidence type="ECO:0000305" key="2"/>
<protein>
    <recommendedName>
        <fullName>Somatostatin-1</fullName>
    </recommendedName>
    <alternativeName>
        <fullName>Somatostatin I</fullName>
    </alternativeName>
    <component>
        <recommendedName>
            <fullName>Somatostatin-14</fullName>
        </recommendedName>
    </component>
</protein>
<organism>
    <name type="scientific">Lophius americanus</name>
    <name type="common">American angler</name>
    <name type="synonym">Anglerfish</name>
    <dbReference type="NCBI Taxonomy" id="8073"/>
    <lineage>
        <taxon>Eukaryota</taxon>
        <taxon>Metazoa</taxon>
        <taxon>Chordata</taxon>
        <taxon>Craniata</taxon>
        <taxon>Vertebrata</taxon>
        <taxon>Euteleostomi</taxon>
        <taxon>Actinopterygii</taxon>
        <taxon>Neopterygii</taxon>
        <taxon>Teleostei</taxon>
        <taxon>Neoteleostei</taxon>
        <taxon>Acanthomorphata</taxon>
        <taxon>Eupercaria</taxon>
        <taxon>Lophiiformes</taxon>
        <taxon>Lophiidae</taxon>
        <taxon>Lophius</taxon>
    </lineage>
</organism>
<dbReference type="EMBL" id="V00640">
    <property type="protein sequence ID" value="CAA23986.1"/>
    <property type="molecule type" value="mRNA"/>
</dbReference>
<dbReference type="PIR" id="A93236">
    <property type="entry name" value="RIAFSI"/>
</dbReference>
<dbReference type="GO" id="GO:0005615">
    <property type="term" value="C:extracellular space"/>
    <property type="evidence" value="ECO:0007669"/>
    <property type="project" value="TreeGrafter"/>
</dbReference>
<dbReference type="GO" id="GO:0005179">
    <property type="term" value="F:hormone activity"/>
    <property type="evidence" value="ECO:0007669"/>
    <property type="project" value="UniProtKB-KW"/>
</dbReference>
<dbReference type="GO" id="GO:0030334">
    <property type="term" value="P:regulation of cell migration"/>
    <property type="evidence" value="ECO:0007669"/>
    <property type="project" value="TreeGrafter"/>
</dbReference>
<dbReference type="InterPro" id="IPR004250">
    <property type="entry name" value="Somatostatin"/>
</dbReference>
<dbReference type="InterPro" id="IPR018142">
    <property type="entry name" value="Somatostatin/Cortistatin_C"/>
</dbReference>
<dbReference type="PANTHER" id="PTHR10558">
    <property type="entry name" value="SOMATOSTATIN"/>
    <property type="match status" value="1"/>
</dbReference>
<dbReference type="PANTHER" id="PTHR10558:SF2">
    <property type="entry name" value="SOMATOSTATIN"/>
    <property type="match status" value="1"/>
</dbReference>
<dbReference type="Pfam" id="PF03002">
    <property type="entry name" value="Somatostatin"/>
    <property type="match status" value="1"/>
</dbReference>
<dbReference type="PIRSF" id="PIRSF001814">
    <property type="entry name" value="Somatostatin"/>
    <property type="match status" value="1"/>
</dbReference>
<gene>
    <name type="primary">sst1</name>
</gene>
<reference key="1">
    <citation type="journal article" date="1980" name="Nature">
        <title>Cloning and sequence analysis of cDNAs encoding two distinct somatostatin precursors found in the endocrine pancreas of anglerfish.</title>
        <authorList>
            <person name="Hobart P.M."/>
            <person name="Crawford R."/>
            <person name="Shen L."/>
            <person name="Pictet R."/>
            <person name="Rutter W.J."/>
        </authorList>
    </citation>
    <scope>NUCLEOTIDE SEQUENCE [MRNA]</scope>
</reference>
<reference key="2">
    <citation type="journal article" date="1980" name="Proc. Natl. Acad. Sci. U.S.A.">
        <title>Nucleotide sequence of a cloned structural gene coding for a precursor of pancreatic somatostatin.</title>
        <authorList>
            <person name="Goodman R.H."/>
            <person name="Jacobs J.W."/>
            <person name="Chin W.W."/>
            <person name="Lund P.K."/>
            <person name="Dee P.C."/>
            <person name="Habener J.F."/>
        </authorList>
    </citation>
    <scope>NUCLEOTIDE SEQUENCE [MRNA] OF 2-121</scope>
</reference>
<reference key="3">
    <citation type="journal article" date="1982" name="Proc. Natl. Acad. Sci. U.S.A.">
        <authorList>
            <person name="Goodman R.H."/>
            <person name="Jacobs J.W."/>
            <person name="Chin W.W."/>
            <person name="Lund P.K."/>
            <person name="Dee P.C."/>
            <person name="Habener J.F."/>
        </authorList>
    </citation>
    <scope>ERRATUM OF PUBMED:6108560</scope>
</reference>
<reference key="4">
    <citation type="journal article" date="1979" name="Endocrinology">
        <title>Isolation and characterization of somatostatin from anglerfish pancreatic islet.</title>
        <authorList>
            <person name="Noe B.D."/>
            <person name="Spiess J."/>
            <person name="Rivier J.E."/>
            <person name="Vale W."/>
        </authorList>
    </citation>
    <scope>PROTEIN SEQUENCE OF 108-121</scope>
</reference>
<feature type="signal peptide" evidence="2">
    <location>
        <begin position="1"/>
        <end position="24"/>
    </location>
</feature>
<feature type="propeptide" id="PRO_0000033130">
    <location>
        <begin position="25"/>
        <end position="105"/>
    </location>
</feature>
<feature type="peptide" id="PRO_0000033131" description="Somatostatin-14">
    <location>
        <begin position="108"/>
        <end position="121"/>
    </location>
</feature>
<feature type="region of interest" description="Disordered" evidence="1">
    <location>
        <begin position="76"/>
        <end position="99"/>
    </location>
</feature>
<feature type="disulfide bond">
    <location>
        <begin position="110"/>
        <end position="121"/>
    </location>
</feature>
<feature type="sequence conflict" description="In Ref. 2." evidence="2" ref="2">
    <original>A</original>
    <variation>V</variation>
    <location>
        <position position="21"/>
    </location>
</feature>
<feature type="sequence conflict" description="In Ref. 2." evidence="2" ref="2">
    <original>G</original>
    <variation>E</variation>
    <location>
        <position position="83"/>
    </location>
</feature>
<accession>P01169</accession>
<name>SMS1_LOPAM</name>
<proteinExistence type="evidence at protein level"/>
<sequence>MKMVSSSRLRCLLVLLLSLTASISCSFAGQRDSKLRLLLHRYPLQGSKQDMTRSALAELLLSDLLQGENEALEEENFPLAEGGPEDAHADLERAASGGPLLAPRERKAGCKNFFWKTFTSC</sequence>
<keyword id="KW-0165">Cleavage on pair of basic residues</keyword>
<keyword id="KW-0903">Direct protein sequencing</keyword>
<keyword id="KW-1015">Disulfide bond</keyword>
<keyword id="KW-0372">Hormone</keyword>
<keyword id="KW-0964">Secreted</keyword>
<keyword id="KW-0732">Signal</keyword>
<comment type="function">
    <text>Somatostatin inhibits the release of somatotropin.</text>
</comment>
<comment type="subcellular location">
    <subcellularLocation>
        <location>Secreted</location>
    </subcellularLocation>
</comment>
<comment type="similarity">
    <text evidence="2">Belongs to the somatostatin family.</text>
</comment>